<gene>
    <name type="ordered locus">MJECL15</name>
</gene>
<organism>
    <name type="scientific">Methanocaldococcus jannaschii (strain ATCC 43067 / DSM 2661 / JAL-1 / JCM 10045 / NBRC 100440)</name>
    <name type="common">Methanococcus jannaschii</name>
    <dbReference type="NCBI Taxonomy" id="243232"/>
    <lineage>
        <taxon>Archaea</taxon>
        <taxon>Methanobacteriati</taxon>
        <taxon>Methanobacteriota</taxon>
        <taxon>Methanomada group</taxon>
        <taxon>Methanococci</taxon>
        <taxon>Methanococcales</taxon>
        <taxon>Methanocaldococcaceae</taxon>
        <taxon>Methanocaldococcus</taxon>
    </lineage>
</organism>
<sequence length="365" mass="43299">MKFFNREKEINEILLILEEEPNNIYFIYGPLNSGKSTLIREVITNRLDKSKYIPFFIDFRTRNILNVDNFIECLFEVDEKSKIDDFREYAKSLADLLVKGSEEISKYYLGMPIKVPKPFFDRIFSKRDKSADVYQYIEYLFAKLNEKGKKPILIFDELQMIREITLNGNRLLLWSLFQFLVALTKVQHLCHVFCLSSDSLFIEYIYGKAELKGGVDYILVDDFDKKTALKFMDFLAKQKNINLTNEDKELIYSYVGGKAKYIYDVIVKLKAVKDLKYILETKLEEERNHLEELLEKVEEDYEGINYDEVLEALKLFKDNYELPKSKIKRKIRIFLIKENILFLNPQKGTLKPQSYLVWNAIKRML</sequence>
<protein>
    <recommendedName>
        <fullName>Uncharacterized ATP-binding protein MJECL15</fullName>
    </recommendedName>
</protein>
<comment type="similarity">
    <text evidence="2">Belongs to the archaeal ATPase family.</text>
</comment>
<keyword id="KW-0002">3D-structure</keyword>
<keyword id="KW-0067">ATP-binding</keyword>
<keyword id="KW-0547">Nucleotide-binding</keyword>
<keyword id="KW-0614">Plasmid</keyword>
<keyword id="KW-1185">Reference proteome</keyword>
<proteinExistence type="evidence at protein level"/>
<feature type="chain" id="PRO_0000184679" description="Uncharacterized ATP-binding protein MJECL15">
    <location>
        <begin position="1"/>
        <end position="365"/>
    </location>
</feature>
<feature type="binding site" evidence="1">
    <location>
        <begin position="29"/>
        <end position="36"/>
    </location>
    <ligand>
        <name>ATP</name>
        <dbReference type="ChEBI" id="CHEBI:30616"/>
    </ligand>
</feature>
<feature type="helix" evidence="3">
    <location>
        <begin position="281"/>
        <end position="299"/>
    </location>
</feature>
<feature type="helix" evidence="3">
    <location>
        <begin position="306"/>
        <end position="318"/>
    </location>
</feature>
<feature type="strand" evidence="3">
    <location>
        <begin position="320"/>
        <end position="323"/>
    </location>
</feature>
<feature type="helix" evidence="3">
    <location>
        <begin position="324"/>
        <end position="326"/>
    </location>
</feature>
<feature type="helix" evidence="3">
    <location>
        <begin position="329"/>
        <end position="337"/>
    </location>
</feature>
<feature type="strand" evidence="3">
    <location>
        <begin position="340"/>
        <end position="344"/>
    </location>
</feature>
<feature type="turn" evidence="3">
    <location>
        <begin position="345"/>
        <end position="348"/>
    </location>
</feature>
<feature type="strand" evidence="3">
    <location>
        <begin position="349"/>
        <end position="354"/>
    </location>
</feature>
<feature type="helix" evidence="3">
    <location>
        <begin position="355"/>
        <end position="364"/>
    </location>
</feature>
<accession>Q60277</accession>
<evidence type="ECO:0000255" key="1"/>
<evidence type="ECO:0000305" key="2"/>
<evidence type="ECO:0007829" key="3">
    <source>
        <dbReference type="PDB" id="3H92"/>
    </source>
</evidence>
<reference key="1">
    <citation type="journal article" date="1996" name="Science">
        <title>Complete genome sequence of the methanogenic archaeon, Methanococcus jannaschii.</title>
        <authorList>
            <person name="Bult C.J."/>
            <person name="White O."/>
            <person name="Olsen G.J."/>
            <person name="Zhou L."/>
            <person name="Fleischmann R.D."/>
            <person name="Sutton G.G."/>
            <person name="Blake J.A."/>
            <person name="FitzGerald L.M."/>
            <person name="Clayton R.A."/>
            <person name="Gocayne J.D."/>
            <person name="Kerlavage A.R."/>
            <person name="Dougherty B.A."/>
            <person name="Tomb J.-F."/>
            <person name="Adams M.D."/>
            <person name="Reich C.I."/>
            <person name="Overbeek R."/>
            <person name="Kirkness E.F."/>
            <person name="Weinstock K.G."/>
            <person name="Merrick J.M."/>
            <person name="Glodek A."/>
            <person name="Scott J.L."/>
            <person name="Geoghagen N.S.M."/>
            <person name="Weidman J.F."/>
            <person name="Fuhrmann J.L."/>
            <person name="Nguyen D."/>
            <person name="Utterback T.R."/>
            <person name="Kelley J.M."/>
            <person name="Peterson J.D."/>
            <person name="Sadow P.W."/>
            <person name="Hanna M.C."/>
            <person name="Cotton M.D."/>
            <person name="Roberts K.M."/>
            <person name="Hurst M.A."/>
            <person name="Kaine B.P."/>
            <person name="Borodovsky M."/>
            <person name="Klenk H.-P."/>
            <person name="Fraser C.M."/>
            <person name="Smith H.O."/>
            <person name="Woese C.R."/>
            <person name="Venter J.C."/>
        </authorList>
    </citation>
    <scope>NUCLEOTIDE SEQUENCE [LARGE SCALE GENOMIC DNA]</scope>
    <source>
        <strain>ATCC 43067 / DSM 2661 / JAL-1 / JCM 10045 / NBRC 100440</strain>
    </source>
</reference>
<reference key="2">
    <citation type="journal article" date="1997" name="Science">
        <title>Evidence for a family of archaeal ATPases.</title>
        <authorList>
            <person name="Koonin E.V."/>
        </authorList>
    </citation>
    <scope>SIMILARITY</scope>
</reference>
<geneLocation type="plasmid">
    <name>large ECE</name>
</geneLocation>
<dbReference type="EMBL" id="L77118">
    <property type="protein sequence ID" value="AAC37088.1"/>
    <property type="molecule type" value="Genomic_DNA"/>
</dbReference>
<dbReference type="PIR" id="G64511">
    <property type="entry name" value="G64511"/>
</dbReference>
<dbReference type="RefSeq" id="WP_010890063.1">
    <property type="nucleotide sequence ID" value="NC_001732.1"/>
</dbReference>
<dbReference type="PDB" id="3H92">
    <property type="method" value="X-ray"/>
    <property type="resolution" value="2.20 A"/>
    <property type="chains" value="A=274-365"/>
</dbReference>
<dbReference type="PDBsum" id="3H92"/>
<dbReference type="SMR" id="Q60277"/>
<dbReference type="PaxDb" id="243232-MJ_ECL15"/>
<dbReference type="EnsemblBacteria" id="AAC37088">
    <property type="protein sequence ID" value="AAC37088"/>
    <property type="gene ID" value="MJ_ECL15"/>
</dbReference>
<dbReference type="GeneID" id="1450801"/>
<dbReference type="KEGG" id="mja:MJ_ECL15"/>
<dbReference type="eggNOG" id="arCOG03407">
    <property type="taxonomic scope" value="Archaea"/>
</dbReference>
<dbReference type="HOGENOM" id="CLU_068608_0_0_2"/>
<dbReference type="InParanoid" id="Q60277"/>
<dbReference type="OrthoDB" id="65550at2157"/>
<dbReference type="PhylomeDB" id="Q60277"/>
<dbReference type="EvolutionaryTrace" id="Q60277"/>
<dbReference type="Proteomes" id="UP000000805">
    <property type="component" value="Plasmid pDSM2661_1"/>
</dbReference>
<dbReference type="GO" id="GO:0005524">
    <property type="term" value="F:ATP binding"/>
    <property type="evidence" value="ECO:0007669"/>
    <property type="project" value="UniProtKB-KW"/>
</dbReference>
<dbReference type="Gene3D" id="3.40.50.300">
    <property type="entry name" value="P-loop containing nucleotide triphosphate hydrolases"/>
    <property type="match status" value="1"/>
</dbReference>
<dbReference type="Gene3D" id="1.10.10.10">
    <property type="entry name" value="Winged helix-like DNA-binding domain superfamily/Winged helix DNA-binding domain"/>
    <property type="match status" value="1"/>
</dbReference>
<dbReference type="InterPro" id="IPR011579">
    <property type="entry name" value="ATPase_dom"/>
</dbReference>
<dbReference type="InterPro" id="IPR049081">
    <property type="entry name" value="MJ1010-like_2nd"/>
</dbReference>
<dbReference type="InterPro" id="IPR027417">
    <property type="entry name" value="P-loop_NTPase"/>
</dbReference>
<dbReference type="InterPro" id="IPR036388">
    <property type="entry name" value="WH-like_DNA-bd_sf"/>
</dbReference>
<dbReference type="PANTHER" id="PTHR34301:SF8">
    <property type="entry name" value="ATPASE DOMAIN-CONTAINING PROTEIN"/>
    <property type="match status" value="1"/>
</dbReference>
<dbReference type="PANTHER" id="PTHR34301">
    <property type="entry name" value="DNA-BINDING PROTEIN-RELATED"/>
    <property type="match status" value="1"/>
</dbReference>
<dbReference type="Pfam" id="PF01637">
    <property type="entry name" value="ATPase_2"/>
    <property type="match status" value="1"/>
</dbReference>
<dbReference type="Pfam" id="PF21690">
    <property type="entry name" value="MJ1010-like_2nd"/>
    <property type="match status" value="1"/>
</dbReference>
<dbReference type="SUPFAM" id="SSF52540">
    <property type="entry name" value="P-loop containing nucleoside triphosphate hydrolases"/>
    <property type="match status" value="1"/>
</dbReference>
<name>Y3515_METJA</name>